<sequence>MAILSTVPALLFALASWAPTVAAQSAADYFVHELPGAPKEPFIKMHAGHVEVTPEHNGNIFFWHFQNQHIANKQRTVIWLNGGPGCSSEDGALMEIGPYRVKDPDHLEYNNGSWNEFANLLFVDNPVGTGFSFVDTNSYLHELPEMADQFVQFLEKWFAMFPEYEHDDLYISGESYAGQHIPYIAKHILERNKKPGVKTPWQLKGLLMGNAWISPKEQYDAYLKYAYEKKLIEKGSPIALQLEQQWRICRTSLAVTNTVDFTECESVLQKLLEQTAKVNAKGERECINMYDIRLRDTFPSCGMNWPPDLVNLTPYLRKAEVVSALHIKPQKTTGWTECNGAVGSAFRAPNSVPSRDYLPDLLKEVPIVLFSGAEDLICNYMGTEAMIGDMEWNGGKGFELTPGNWAPRRDWTVEGQPAGFWQEARNLTYILFYNSSHMVPFDYARRSRDMLDRFMNVDISSVGGTPTDSRLDGEQGPATSVGDIGKNGTSADAETQKKLDEAKWKAYYRSGEIVLVIVIIAAGAWGWYVWRERRKRRGYSGIMGNTPPIAQRGTTRGLEGFRDRRTGRDVETGDFDESELDDLHVTTPTVEMDKDRYSVGGDSDDEPHDEKPSRSNGGRSGR</sequence>
<dbReference type="EC" id="3.4.16.6"/>
<dbReference type="EMBL" id="GG697343">
    <property type="protein sequence ID" value="EFQ29021.1"/>
    <property type="molecule type" value="Genomic_DNA"/>
</dbReference>
<dbReference type="RefSeq" id="XP_008093041.1">
    <property type="nucleotide sequence ID" value="XM_008094850.1"/>
</dbReference>
<dbReference type="SMR" id="E3QDT3"/>
<dbReference type="STRING" id="645133.E3QDT3"/>
<dbReference type="ESTHER" id="colgm-kex1">
    <property type="family name" value="Carboxypeptidase_S10"/>
</dbReference>
<dbReference type="GlyCosmos" id="E3QDT3">
    <property type="glycosylation" value="4 sites, No reported glycans"/>
</dbReference>
<dbReference type="EnsemblFungi" id="EFQ29021">
    <property type="protein sequence ID" value="EFQ29021"/>
    <property type="gene ID" value="GLRG_04165"/>
</dbReference>
<dbReference type="GeneID" id="24409530"/>
<dbReference type="VEuPathDB" id="FungiDB:GLRG_04165"/>
<dbReference type="eggNOG" id="KOG1282">
    <property type="taxonomic scope" value="Eukaryota"/>
</dbReference>
<dbReference type="HOGENOM" id="CLU_008523_11_0_1"/>
<dbReference type="OrthoDB" id="443318at2759"/>
<dbReference type="Proteomes" id="UP000008782">
    <property type="component" value="Unassembled WGS sequence"/>
</dbReference>
<dbReference type="GO" id="GO:0016020">
    <property type="term" value="C:membrane"/>
    <property type="evidence" value="ECO:0007669"/>
    <property type="project" value="UniProtKB-KW"/>
</dbReference>
<dbReference type="GO" id="GO:0005802">
    <property type="term" value="C:trans-Golgi network"/>
    <property type="evidence" value="ECO:0007669"/>
    <property type="project" value="TreeGrafter"/>
</dbReference>
<dbReference type="GO" id="GO:0004185">
    <property type="term" value="F:serine-type carboxypeptidase activity"/>
    <property type="evidence" value="ECO:0007669"/>
    <property type="project" value="UniProtKB-EC"/>
</dbReference>
<dbReference type="GO" id="GO:0006915">
    <property type="term" value="P:apoptotic process"/>
    <property type="evidence" value="ECO:0007669"/>
    <property type="project" value="UniProtKB-KW"/>
</dbReference>
<dbReference type="GO" id="GO:0006508">
    <property type="term" value="P:proteolysis"/>
    <property type="evidence" value="ECO:0007669"/>
    <property type="project" value="UniProtKB-KW"/>
</dbReference>
<dbReference type="FunFam" id="3.40.50.1820:FF:000121">
    <property type="entry name" value="Carboxypeptidase D"/>
    <property type="match status" value="1"/>
</dbReference>
<dbReference type="Gene3D" id="3.40.50.1820">
    <property type="entry name" value="alpha/beta hydrolase"/>
    <property type="match status" value="1"/>
</dbReference>
<dbReference type="InterPro" id="IPR029058">
    <property type="entry name" value="AB_hydrolase_fold"/>
</dbReference>
<dbReference type="InterPro" id="IPR001563">
    <property type="entry name" value="Peptidase_S10"/>
</dbReference>
<dbReference type="InterPro" id="IPR018202">
    <property type="entry name" value="Ser_caboxypep_ser_AS"/>
</dbReference>
<dbReference type="PANTHER" id="PTHR11802:SF190">
    <property type="entry name" value="PHEROMONE-PROCESSING CARBOXYPEPTIDASE KEX1"/>
    <property type="match status" value="1"/>
</dbReference>
<dbReference type="PANTHER" id="PTHR11802">
    <property type="entry name" value="SERINE PROTEASE FAMILY S10 SERINE CARBOXYPEPTIDASE"/>
    <property type="match status" value="1"/>
</dbReference>
<dbReference type="Pfam" id="PF00450">
    <property type="entry name" value="Peptidase_S10"/>
    <property type="match status" value="1"/>
</dbReference>
<dbReference type="PRINTS" id="PR00724">
    <property type="entry name" value="CRBOXYPTASEC"/>
</dbReference>
<dbReference type="SUPFAM" id="SSF53474">
    <property type="entry name" value="alpha/beta-Hydrolases"/>
    <property type="match status" value="1"/>
</dbReference>
<dbReference type="PROSITE" id="PS00131">
    <property type="entry name" value="CARBOXYPEPT_SER_SER"/>
    <property type="match status" value="1"/>
</dbReference>
<keyword id="KW-0053">Apoptosis</keyword>
<keyword id="KW-0121">Carboxypeptidase</keyword>
<keyword id="KW-0325">Glycoprotein</keyword>
<keyword id="KW-0333">Golgi apparatus</keyword>
<keyword id="KW-0378">Hydrolase</keyword>
<keyword id="KW-0472">Membrane</keyword>
<keyword id="KW-0645">Protease</keyword>
<keyword id="KW-1185">Reference proteome</keyword>
<keyword id="KW-0732">Signal</keyword>
<keyword id="KW-0812">Transmembrane</keyword>
<keyword id="KW-1133">Transmembrane helix</keyword>
<gene>
    <name type="primary">KEX1</name>
    <name type="ORF">GLRG_04165</name>
</gene>
<name>KEX1_COLGM</name>
<reference key="1">
    <citation type="journal article" date="2012" name="Nat. Genet.">
        <title>Lifestyle transitions in plant pathogenic Colletotrichum fungi deciphered by genome and transcriptome analyses.</title>
        <authorList>
            <person name="O'Connell R.J."/>
            <person name="Thon M.R."/>
            <person name="Hacquard S."/>
            <person name="Amyotte S.G."/>
            <person name="Kleemann J."/>
            <person name="Torres M.F."/>
            <person name="Damm U."/>
            <person name="Buiate E.A."/>
            <person name="Epstein L."/>
            <person name="Alkan N."/>
            <person name="Altmueller J."/>
            <person name="Alvarado-Balderrama L."/>
            <person name="Bauser C.A."/>
            <person name="Becker C."/>
            <person name="Birren B.W."/>
            <person name="Chen Z."/>
            <person name="Choi J."/>
            <person name="Crouch J.A."/>
            <person name="Duvick J.P."/>
            <person name="Farman M.A."/>
            <person name="Gan P."/>
            <person name="Heiman D."/>
            <person name="Henrissat B."/>
            <person name="Howard R.J."/>
            <person name="Kabbage M."/>
            <person name="Koch C."/>
            <person name="Kracher B."/>
            <person name="Kubo Y."/>
            <person name="Law A.D."/>
            <person name="Lebrun M.-H."/>
            <person name="Lee Y.-H."/>
            <person name="Miyara I."/>
            <person name="Moore N."/>
            <person name="Neumann U."/>
            <person name="Nordstroem K."/>
            <person name="Panaccione D.G."/>
            <person name="Panstruga R."/>
            <person name="Place M."/>
            <person name="Proctor R.H."/>
            <person name="Prusky D."/>
            <person name="Rech G."/>
            <person name="Reinhardt R."/>
            <person name="Rollins J.A."/>
            <person name="Rounsley S."/>
            <person name="Schardl C.L."/>
            <person name="Schwartz D.C."/>
            <person name="Shenoy N."/>
            <person name="Shirasu K."/>
            <person name="Sikhakolli U.R."/>
            <person name="Stueber K."/>
            <person name="Sukno S.A."/>
            <person name="Sweigard J.A."/>
            <person name="Takano Y."/>
            <person name="Takahara H."/>
            <person name="Trail F."/>
            <person name="van der Does H.C."/>
            <person name="Voll L.M."/>
            <person name="Will I."/>
            <person name="Young S."/>
            <person name="Zeng Q."/>
            <person name="Zhang J."/>
            <person name="Zhou S."/>
            <person name="Dickman M.B."/>
            <person name="Schulze-Lefert P."/>
            <person name="Ver Loren van Themaat E."/>
            <person name="Ma L.-J."/>
            <person name="Vaillancourt L.J."/>
        </authorList>
    </citation>
    <scope>NUCLEOTIDE SEQUENCE [LARGE SCALE GENOMIC DNA]</scope>
    <source>
        <strain>M1.001 / M2 / FGSC 10212</strain>
    </source>
</reference>
<proteinExistence type="inferred from homology"/>
<evidence type="ECO:0000250" key="1"/>
<evidence type="ECO:0000255" key="2"/>
<evidence type="ECO:0000255" key="3">
    <source>
        <dbReference type="PROSITE-ProRule" id="PRU10074"/>
    </source>
</evidence>
<evidence type="ECO:0000256" key="4">
    <source>
        <dbReference type="SAM" id="MobiDB-lite"/>
    </source>
</evidence>
<evidence type="ECO:0000305" key="5"/>
<protein>
    <recommendedName>
        <fullName>Pheromone-processing carboxypeptidase KEX1</fullName>
        <ecNumber>3.4.16.6</ecNumber>
    </recommendedName>
    <alternativeName>
        <fullName>Carboxypeptidase D</fullName>
    </alternativeName>
</protein>
<organism>
    <name type="scientific">Colletotrichum graminicola (strain M1.001 / M2 / FGSC 10212)</name>
    <name type="common">Maize anthracnose fungus</name>
    <name type="synonym">Glomerella graminicola</name>
    <dbReference type="NCBI Taxonomy" id="645133"/>
    <lineage>
        <taxon>Eukaryota</taxon>
        <taxon>Fungi</taxon>
        <taxon>Dikarya</taxon>
        <taxon>Ascomycota</taxon>
        <taxon>Pezizomycotina</taxon>
        <taxon>Sordariomycetes</taxon>
        <taxon>Hypocreomycetidae</taxon>
        <taxon>Glomerellales</taxon>
        <taxon>Glomerellaceae</taxon>
        <taxon>Colletotrichum</taxon>
        <taxon>Colletotrichum graminicola species complex</taxon>
    </lineage>
</organism>
<comment type="function">
    <text evidence="1">Protease with a carboxypeptidase B-like function involved in the C-terminal processing of the lysine and arginine residues from protein precursors. Promotes cell fusion and is involved in the programmed cell death (By similarity).</text>
</comment>
<comment type="catalytic activity">
    <reaction>
        <text>Preferential release of a C-terminal arginine or lysine residue.</text>
        <dbReference type="EC" id="3.4.16.6"/>
    </reaction>
</comment>
<comment type="subcellular location">
    <subcellularLocation>
        <location evidence="1">Golgi apparatus</location>
        <location evidence="1">trans-Golgi network membrane</location>
        <topology evidence="1">Single-pass type I membrane protein</topology>
    </subcellularLocation>
</comment>
<comment type="similarity">
    <text evidence="5">Belongs to the peptidase S10 family.</text>
</comment>
<feature type="signal peptide" evidence="2">
    <location>
        <begin position="1"/>
        <end position="23"/>
    </location>
</feature>
<feature type="chain" id="PRO_0000411916" description="Pheromone-processing carboxypeptidase KEX1">
    <location>
        <begin position="24"/>
        <end position="622"/>
    </location>
</feature>
<feature type="topological domain" description="Lumenal" evidence="2">
    <location>
        <begin position="24"/>
        <end position="509"/>
    </location>
</feature>
<feature type="transmembrane region" description="Helical" evidence="2">
    <location>
        <begin position="510"/>
        <end position="530"/>
    </location>
</feature>
<feature type="topological domain" description="Cytoplasmic" evidence="2">
    <location>
        <begin position="531"/>
        <end position="622"/>
    </location>
</feature>
<feature type="region of interest" description="Disordered" evidence="4">
    <location>
        <begin position="465"/>
        <end position="492"/>
    </location>
</feature>
<feature type="region of interest" description="Disordered" evidence="4">
    <location>
        <begin position="539"/>
        <end position="622"/>
    </location>
</feature>
<feature type="compositionally biased region" description="Basic and acidic residues" evidence="4">
    <location>
        <begin position="559"/>
        <end position="571"/>
    </location>
</feature>
<feature type="active site" evidence="3">
    <location>
        <position position="175"/>
    </location>
</feature>
<feature type="active site" evidence="3">
    <location>
        <position position="375"/>
    </location>
</feature>
<feature type="active site" evidence="3">
    <location>
        <position position="437"/>
    </location>
</feature>
<feature type="glycosylation site" description="N-linked (GlcNAc...) asparagine" evidence="2">
    <location>
        <position position="111"/>
    </location>
</feature>
<feature type="glycosylation site" description="N-linked (GlcNAc...) asparagine" evidence="2">
    <location>
        <position position="426"/>
    </location>
</feature>
<feature type="glycosylation site" description="N-linked (GlcNAc...) asparagine" evidence="2">
    <location>
        <position position="434"/>
    </location>
</feature>
<feature type="glycosylation site" description="N-linked (GlcNAc...) asparagine" evidence="2">
    <location>
        <position position="487"/>
    </location>
</feature>
<accession>E3QDT3</accession>